<sequence>MTVKLTIDCMGGDHGPSVTVPAAVKFVRAHPDAHLMLVGIESAIRAQLKKLKALDDPALTIVPATEVVAMDDPVEVALRKKKDSSMRVALNHVKEGAAQACISAGNTGALMAVSRYVLKTLPGIERPAIAFALPNPTGYTMMLDLGANVDCEPQHLLQFAEMGHALVAALEGKERPTIGLLNIGEEVIKGNETIKRAGELLRASTLNFRGNVEGNDIYKGTVDVIVCDGFVGNVALKTSEGLAQMLSDIIREEFGRSLMSKLMALLALPVLMRFKKRVDHRQYNGAALLGLKSLVIKSHGSADAYAFEWAIKRGYDAVKNGVLERLARAMADNSVSLGDGEHDAGGAGQASPAAGHHAEPSAAQSSKA</sequence>
<protein>
    <recommendedName>
        <fullName evidence="1">Phosphate acyltransferase</fullName>
        <ecNumber evidence="1">2.3.1.274</ecNumber>
    </recommendedName>
    <alternativeName>
        <fullName evidence="1">Acyl-ACP phosphotransacylase</fullName>
    </alternativeName>
    <alternativeName>
        <fullName evidence="1">Acyl-[acyl-carrier-protein]--phosphate acyltransferase</fullName>
    </alternativeName>
    <alternativeName>
        <fullName evidence="1">Phosphate-acyl-ACP acyltransferase</fullName>
    </alternativeName>
</protein>
<feature type="chain" id="PRO_1000001727" description="Phosphate acyltransferase">
    <location>
        <begin position="1"/>
        <end position="368"/>
    </location>
</feature>
<feature type="region of interest" description="Disordered" evidence="2">
    <location>
        <begin position="337"/>
        <end position="368"/>
    </location>
</feature>
<comment type="function">
    <text evidence="1">Catalyzes the reversible formation of acyl-phosphate (acyl-PO(4)) from acyl-[acyl-carrier-protein] (acyl-ACP). This enzyme utilizes acyl-ACP as fatty acyl donor, but not acyl-CoA.</text>
</comment>
<comment type="catalytic activity">
    <reaction evidence="1">
        <text>a fatty acyl-[ACP] + phosphate = an acyl phosphate + holo-[ACP]</text>
        <dbReference type="Rhea" id="RHEA:42292"/>
        <dbReference type="Rhea" id="RHEA-COMP:9685"/>
        <dbReference type="Rhea" id="RHEA-COMP:14125"/>
        <dbReference type="ChEBI" id="CHEBI:43474"/>
        <dbReference type="ChEBI" id="CHEBI:59918"/>
        <dbReference type="ChEBI" id="CHEBI:64479"/>
        <dbReference type="ChEBI" id="CHEBI:138651"/>
        <dbReference type="EC" id="2.3.1.274"/>
    </reaction>
</comment>
<comment type="pathway">
    <text evidence="1">Lipid metabolism; phospholipid metabolism.</text>
</comment>
<comment type="subunit">
    <text evidence="1">Homodimer. Probably interacts with PlsY.</text>
</comment>
<comment type="subcellular location">
    <subcellularLocation>
        <location evidence="1">Cytoplasm</location>
    </subcellularLocation>
    <text evidence="1">Associated with the membrane possibly through PlsY.</text>
</comment>
<comment type="similarity">
    <text evidence="1">Belongs to the PlsX family.</text>
</comment>
<proteinExistence type="inferred from homology"/>
<reference key="1">
    <citation type="submission" date="2006-08" db="EMBL/GenBank/DDBJ databases">
        <title>Complete sequence of chromosome 1 of Burkholderia cenocepacia HI2424.</title>
        <authorList>
            <person name="Copeland A."/>
            <person name="Lucas S."/>
            <person name="Lapidus A."/>
            <person name="Barry K."/>
            <person name="Detter J.C."/>
            <person name="Glavina del Rio T."/>
            <person name="Hammon N."/>
            <person name="Israni S."/>
            <person name="Pitluck S."/>
            <person name="Chain P."/>
            <person name="Malfatti S."/>
            <person name="Shin M."/>
            <person name="Vergez L."/>
            <person name="Schmutz J."/>
            <person name="Larimer F."/>
            <person name="Land M."/>
            <person name="Hauser L."/>
            <person name="Kyrpides N."/>
            <person name="Kim E."/>
            <person name="LiPuma J.J."/>
            <person name="Gonzalez C.F."/>
            <person name="Konstantinidis K."/>
            <person name="Tiedje J.M."/>
            <person name="Richardson P."/>
        </authorList>
    </citation>
    <scope>NUCLEOTIDE SEQUENCE [LARGE SCALE GENOMIC DNA]</scope>
    <source>
        <strain>HI2424</strain>
    </source>
</reference>
<gene>
    <name evidence="1" type="primary">plsX</name>
    <name type="ordered locus">Bcen2424_1120</name>
</gene>
<dbReference type="EC" id="2.3.1.274" evidence="1"/>
<dbReference type="EMBL" id="CP000458">
    <property type="protein sequence ID" value="ABK07872.1"/>
    <property type="molecule type" value="Genomic_DNA"/>
</dbReference>
<dbReference type="RefSeq" id="WP_006476507.1">
    <property type="nucleotide sequence ID" value="NC_008542.1"/>
</dbReference>
<dbReference type="SMR" id="A0K5U5"/>
<dbReference type="GeneID" id="83047872"/>
<dbReference type="KEGG" id="bch:Bcen2424_1120"/>
<dbReference type="HOGENOM" id="CLU_039379_1_0_4"/>
<dbReference type="UniPathway" id="UPA00085"/>
<dbReference type="GO" id="GO:0005737">
    <property type="term" value="C:cytoplasm"/>
    <property type="evidence" value="ECO:0007669"/>
    <property type="project" value="UniProtKB-SubCell"/>
</dbReference>
<dbReference type="GO" id="GO:0043811">
    <property type="term" value="F:phosphate:acyl-[acyl carrier protein] acyltransferase activity"/>
    <property type="evidence" value="ECO:0007669"/>
    <property type="project" value="UniProtKB-UniRule"/>
</dbReference>
<dbReference type="GO" id="GO:0006633">
    <property type="term" value="P:fatty acid biosynthetic process"/>
    <property type="evidence" value="ECO:0007669"/>
    <property type="project" value="UniProtKB-UniRule"/>
</dbReference>
<dbReference type="GO" id="GO:0008654">
    <property type="term" value="P:phospholipid biosynthetic process"/>
    <property type="evidence" value="ECO:0007669"/>
    <property type="project" value="UniProtKB-KW"/>
</dbReference>
<dbReference type="Gene3D" id="3.40.718.10">
    <property type="entry name" value="Isopropylmalate Dehydrogenase"/>
    <property type="match status" value="1"/>
</dbReference>
<dbReference type="HAMAP" id="MF_00019">
    <property type="entry name" value="PlsX"/>
    <property type="match status" value="1"/>
</dbReference>
<dbReference type="InterPro" id="IPR003664">
    <property type="entry name" value="FA_synthesis"/>
</dbReference>
<dbReference type="InterPro" id="IPR012281">
    <property type="entry name" value="Phospholipid_synth_PlsX-like"/>
</dbReference>
<dbReference type="NCBIfam" id="TIGR00182">
    <property type="entry name" value="plsX"/>
    <property type="match status" value="1"/>
</dbReference>
<dbReference type="PANTHER" id="PTHR30100">
    <property type="entry name" value="FATTY ACID/PHOSPHOLIPID SYNTHESIS PROTEIN PLSX"/>
    <property type="match status" value="1"/>
</dbReference>
<dbReference type="PANTHER" id="PTHR30100:SF1">
    <property type="entry name" value="PHOSPHATE ACYLTRANSFERASE"/>
    <property type="match status" value="1"/>
</dbReference>
<dbReference type="Pfam" id="PF02504">
    <property type="entry name" value="FA_synthesis"/>
    <property type="match status" value="1"/>
</dbReference>
<dbReference type="PIRSF" id="PIRSF002465">
    <property type="entry name" value="Phsphlp_syn_PlsX"/>
    <property type="match status" value="1"/>
</dbReference>
<dbReference type="SUPFAM" id="SSF53659">
    <property type="entry name" value="Isocitrate/Isopropylmalate dehydrogenase-like"/>
    <property type="match status" value="1"/>
</dbReference>
<keyword id="KW-0963">Cytoplasm</keyword>
<keyword id="KW-0444">Lipid biosynthesis</keyword>
<keyword id="KW-0443">Lipid metabolism</keyword>
<keyword id="KW-0594">Phospholipid biosynthesis</keyword>
<keyword id="KW-1208">Phospholipid metabolism</keyword>
<keyword id="KW-0808">Transferase</keyword>
<evidence type="ECO:0000255" key="1">
    <source>
        <dbReference type="HAMAP-Rule" id="MF_00019"/>
    </source>
</evidence>
<evidence type="ECO:0000256" key="2">
    <source>
        <dbReference type="SAM" id="MobiDB-lite"/>
    </source>
</evidence>
<accession>A0K5U5</accession>
<organism>
    <name type="scientific">Burkholderia cenocepacia (strain HI2424)</name>
    <dbReference type="NCBI Taxonomy" id="331272"/>
    <lineage>
        <taxon>Bacteria</taxon>
        <taxon>Pseudomonadati</taxon>
        <taxon>Pseudomonadota</taxon>
        <taxon>Betaproteobacteria</taxon>
        <taxon>Burkholderiales</taxon>
        <taxon>Burkholderiaceae</taxon>
        <taxon>Burkholderia</taxon>
        <taxon>Burkholderia cepacia complex</taxon>
    </lineage>
</organism>
<name>PLSX_BURCH</name>